<keyword id="KW-0963">Cytoplasm</keyword>
<keyword id="KW-0342">GTP-binding</keyword>
<keyword id="KW-0547">Nucleotide-binding</keyword>
<keyword id="KW-0648">Protein biosynthesis</keyword>
<evidence type="ECO:0000255" key="1">
    <source>
        <dbReference type="HAMAP-Rule" id="MF_00072"/>
    </source>
</evidence>
<reference key="1">
    <citation type="journal article" date="2006" name="J. Bacteriol.">
        <title>Complete genome sequence of Yersinia pestis strains Antiqua and Nepal516: evidence of gene reduction in an emerging pathogen.</title>
        <authorList>
            <person name="Chain P.S.G."/>
            <person name="Hu P."/>
            <person name="Malfatti S.A."/>
            <person name="Radnedge L."/>
            <person name="Larimer F."/>
            <person name="Vergez L.M."/>
            <person name="Worsham P."/>
            <person name="Chu M.C."/>
            <person name="Andersen G.L."/>
        </authorList>
    </citation>
    <scope>NUCLEOTIDE SEQUENCE [LARGE SCALE GENOMIC DNA]</scope>
    <source>
        <strain>Antiqua</strain>
    </source>
</reference>
<dbReference type="EMBL" id="CP000308">
    <property type="protein sequence ID" value="ABG15816.1"/>
    <property type="molecule type" value="Genomic_DNA"/>
</dbReference>
<dbReference type="RefSeq" id="WP_002209209.1">
    <property type="nucleotide sequence ID" value="NZ_CP009906.1"/>
</dbReference>
<dbReference type="SMR" id="Q1C156"/>
<dbReference type="GeneID" id="57974180"/>
<dbReference type="KEGG" id="ypa:YPA_3854"/>
<dbReference type="Proteomes" id="UP000001971">
    <property type="component" value="Chromosome"/>
</dbReference>
<dbReference type="GO" id="GO:0005829">
    <property type="term" value="C:cytosol"/>
    <property type="evidence" value="ECO:0007669"/>
    <property type="project" value="TreeGrafter"/>
</dbReference>
<dbReference type="GO" id="GO:0005525">
    <property type="term" value="F:GTP binding"/>
    <property type="evidence" value="ECO:0007669"/>
    <property type="project" value="UniProtKB-UniRule"/>
</dbReference>
<dbReference type="GO" id="GO:0003924">
    <property type="term" value="F:GTPase activity"/>
    <property type="evidence" value="ECO:0007669"/>
    <property type="project" value="InterPro"/>
</dbReference>
<dbReference type="GO" id="GO:0097216">
    <property type="term" value="F:guanosine tetraphosphate binding"/>
    <property type="evidence" value="ECO:0007669"/>
    <property type="project" value="UniProtKB-ARBA"/>
</dbReference>
<dbReference type="GO" id="GO:0016150">
    <property type="term" value="F:translation release factor activity, codon nonspecific"/>
    <property type="evidence" value="ECO:0007669"/>
    <property type="project" value="TreeGrafter"/>
</dbReference>
<dbReference type="GO" id="GO:0016149">
    <property type="term" value="F:translation release factor activity, codon specific"/>
    <property type="evidence" value="ECO:0007669"/>
    <property type="project" value="UniProtKB-UniRule"/>
</dbReference>
<dbReference type="GO" id="GO:0006449">
    <property type="term" value="P:regulation of translational termination"/>
    <property type="evidence" value="ECO:0007669"/>
    <property type="project" value="UniProtKB-UniRule"/>
</dbReference>
<dbReference type="CDD" id="cd04169">
    <property type="entry name" value="RF3"/>
    <property type="match status" value="1"/>
</dbReference>
<dbReference type="CDD" id="cd03689">
    <property type="entry name" value="RF3_II"/>
    <property type="match status" value="1"/>
</dbReference>
<dbReference type="CDD" id="cd16259">
    <property type="entry name" value="RF3_III"/>
    <property type="match status" value="1"/>
</dbReference>
<dbReference type="FunFam" id="2.40.30.10:FF:000040">
    <property type="entry name" value="Peptide chain release factor 3"/>
    <property type="match status" value="1"/>
</dbReference>
<dbReference type="FunFam" id="3.30.70.3280:FF:000001">
    <property type="entry name" value="Peptide chain release factor 3"/>
    <property type="match status" value="1"/>
</dbReference>
<dbReference type="FunFam" id="3.40.50.300:FF:000542">
    <property type="entry name" value="Peptide chain release factor 3"/>
    <property type="match status" value="1"/>
</dbReference>
<dbReference type="Gene3D" id="3.40.50.300">
    <property type="entry name" value="P-loop containing nucleotide triphosphate hydrolases"/>
    <property type="match status" value="2"/>
</dbReference>
<dbReference type="Gene3D" id="3.30.70.3280">
    <property type="entry name" value="Peptide chain release factor 3, domain III"/>
    <property type="match status" value="1"/>
</dbReference>
<dbReference type="HAMAP" id="MF_00072">
    <property type="entry name" value="Rel_fac_3"/>
    <property type="match status" value="1"/>
</dbReference>
<dbReference type="InterPro" id="IPR053905">
    <property type="entry name" value="EF-G-like_DII"/>
</dbReference>
<dbReference type="InterPro" id="IPR035647">
    <property type="entry name" value="EFG_III/V"/>
</dbReference>
<dbReference type="InterPro" id="IPR031157">
    <property type="entry name" value="G_TR_CS"/>
</dbReference>
<dbReference type="InterPro" id="IPR027417">
    <property type="entry name" value="P-loop_NTPase"/>
</dbReference>
<dbReference type="InterPro" id="IPR004548">
    <property type="entry name" value="PrfC"/>
</dbReference>
<dbReference type="InterPro" id="IPR032090">
    <property type="entry name" value="RF3_C"/>
</dbReference>
<dbReference type="InterPro" id="IPR038467">
    <property type="entry name" value="RF3_dom_3_sf"/>
</dbReference>
<dbReference type="InterPro" id="IPR041732">
    <property type="entry name" value="RF3_GTP-bd"/>
</dbReference>
<dbReference type="InterPro" id="IPR005225">
    <property type="entry name" value="Small_GTP-bd"/>
</dbReference>
<dbReference type="InterPro" id="IPR000795">
    <property type="entry name" value="T_Tr_GTP-bd_dom"/>
</dbReference>
<dbReference type="InterPro" id="IPR009000">
    <property type="entry name" value="Transl_B-barrel_sf"/>
</dbReference>
<dbReference type="NCBIfam" id="TIGR00503">
    <property type="entry name" value="prfC"/>
    <property type="match status" value="1"/>
</dbReference>
<dbReference type="NCBIfam" id="NF001964">
    <property type="entry name" value="PRK00741.1"/>
    <property type="match status" value="1"/>
</dbReference>
<dbReference type="NCBIfam" id="TIGR00231">
    <property type="entry name" value="small_GTP"/>
    <property type="match status" value="1"/>
</dbReference>
<dbReference type="PANTHER" id="PTHR43556">
    <property type="entry name" value="PEPTIDE CHAIN RELEASE FACTOR RF3"/>
    <property type="match status" value="1"/>
</dbReference>
<dbReference type="PANTHER" id="PTHR43556:SF2">
    <property type="entry name" value="PEPTIDE CHAIN RELEASE FACTOR RF3"/>
    <property type="match status" value="1"/>
</dbReference>
<dbReference type="Pfam" id="PF22042">
    <property type="entry name" value="EF-G_D2"/>
    <property type="match status" value="1"/>
</dbReference>
<dbReference type="Pfam" id="PF00009">
    <property type="entry name" value="GTP_EFTU"/>
    <property type="match status" value="1"/>
</dbReference>
<dbReference type="Pfam" id="PF16658">
    <property type="entry name" value="RF3_C"/>
    <property type="match status" value="1"/>
</dbReference>
<dbReference type="PRINTS" id="PR00315">
    <property type="entry name" value="ELONGATNFCT"/>
</dbReference>
<dbReference type="SUPFAM" id="SSF54980">
    <property type="entry name" value="EF-G C-terminal domain-like"/>
    <property type="match status" value="1"/>
</dbReference>
<dbReference type="SUPFAM" id="SSF52540">
    <property type="entry name" value="P-loop containing nucleoside triphosphate hydrolases"/>
    <property type="match status" value="1"/>
</dbReference>
<dbReference type="SUPFAM" id="SSF50447">
    <property type="entry name" value="Translation proteins"/>
    <property type="match status" value="1"/>
</dbReference>
<dbReference type="PROSITE" id="PS00301">
    <property type="entry name" value="G_TR_1"/>
    <property type="match status" value="1"/>
</dbReference>
<dbReference type="PROSITE" id="PS51722">
    <property type="entry name" value="G_TR_2"/>
    <property type="match status" value="1"/>
</dbReference>
<comment type="function">
    <text evidence="1">Increases the formation of ribosomal termination complexes and stimulates activities of RF-1 and RF-2. It binds guanine nucleotides and has strong preference for UGA stop codons. It may interact directly with the ribosome. The stimulation of RF-1 and RF-2 is significantly reduced by GTP and GDP, but not by GMP.</text>
</comment>
<comment type="subcellular location">
    <subcellularLocation>
        <location evidence="1">Cytoplasm</location>
    </subcellularLocation>
</comment>
<comment type="similarity">
    <text evidence="1">Belongs to the TRAFAC class translation factor GTPase superfamily. Classic translation factor GTPase family. PrfC subfamily.</text>
</comment>
<feature type="chain" id="PRO_1000023697" description="Peptide chain release factor 3">
    <location>
        <begin position="1"/>
        <end position="529"/>
    </location>
</feature>
<feature type="domain" description="tr-type G">
    <location>
        <begin position="11"/>
        <end position="280"/>
    </location>
</feature>
<feature type="binding site" evidence="1">
    <location>
        <begin position="20"/>
        <end position="27"/>
    </location>
    <ligand>
        <name>GTP</name>
        <dbReference type="ChEBI" id="CHEBI:37565"/>
    </ligand>
</feature>
<feature type="binding site" evidence="1">
    <location>
        <begin position="88"/>
        <end position="92"/>
    </location>
    <ligand>
        <name>GTP</name>
        <dbReference type="ChEBI" id="CHEBI:37565"/>
    </ligand>
</feature>
<feature type="binding site" evidence="1">
    <location>
        <begin position="142"/>
        <end position="145"/>
    </location>
    <ligand>
        <name>GTP</name>
        <dbReference type="ChEBI" id="CHEBI:37565"/>
    </ligand>
</feature>
<organism>
    <name type="scientific">Yersinia pestis bv. Antiqua (strain Antiqua)</name>
    <dbReference type="NCBI Taxonomy" id="360102"/>
    <lineage>
        <taxon>Bacteria</taxon>
        <taxon>Pseudomonadati</taxon>
        <taxon>Pseudomonadota</taxon>
        <taxon>Gammaproteobacteria</taxon>
        <taxon>Enterobacterales</taxon>
        <taxon>Yersiniaceae</taxon>
        <taxon>Yersinia</taxon>
    </lineage>
</organism>
<protein>
    <recommendedName>
        <fullName evidence="1">Peptide chain release factor 3</fullName>
        <shortName evidence="1">RF-3</shortName>
    </recommendedName>
</protein>
<sequence length="529" mass="59640">MSPSEYALEVAKRRTFAIISHPDAGKTTITEKVLLFGHAIQTAGTVKGRGSSHHAKSDWMEMEKQRGISITTSVMQFPYGGCLVNLLDTPGHEDFSEDTYRTLTAVDCCLMVIDAAKGVEDRTRKLMEVTRLRDTPILTFMNKLDREIRDPMEVLDEVERELNIACSPITWPIGCGKSFKGVYHLHKDETYLYQSGKGHTIQEVRIVKGLNNPDLDVAVGEDLAKQFRQELELVQGASHEFDHEAFLSGDLTPVFFGTALGNFGVDHMLDGLVEWAPAPMPRKTDTRVVVASEEKFTGFVFKIQANMDPKHRDRVAFMRVVSGRFEKGMKLRQVRTKKDVVISDALTFMAGDRSHVEEAYAGDIIGLHNHGTIQIGDTFTQGEDMKFTGIPNFAPELFRRIRLRDPLKQKQLLKGLVQLSEEGAVQVFRPLSNNDLIVGAVGVLQFEVVSSRLKSEYNVEAVYESVNVSTARWVECHDVKKFEEFKRKNELNLALDGGDNLSYIAPTMVNLNITQERYPDVIFRKTREH</sequence>
<accession>Q1C156</accession>
<proteinExistence type="inferred from homology"/>
<gene>
    <name evidence="1" type="primary">prfC</name>
    <name type="ordered locus">YPA_3854</name>
</gene>
<name>RF3_YERPA</name>